<keyword id="KW-0238">DNA-binding</keyword>
<keyword id="KW-1185">Reference proteome</keyword>
<keyword id="KW-0677">Repeat</keyword>
<keyword id="KW-0804">Transcription</keyword>
<keyword id="KW-0805">Transcription regulation</keyword>
<reference key="1">
    <citation type="journal article" date="2002" name="J. Bacteriol.">
        <title>Whole-genome comparison of Mycobacterium tuberculosis clinical and laboratory strains.</title>
        <authorList>
            <person name="Fleischmann R.D."/>
            <person name="Alland D."/>
            <person name="Eisen J.A."/>
            <person name="Carpenter L."/>
            <person name="White O."/>
            <person name="Peterson J.D."/>
            <person name="DeBoy R.T."/>
            <person name="Dodson R.J."/>
            <person name="Gwinn M.L."/>
            <person name="Haft D.H."/>
            <person name="Hickey E.K."/>
            <person name="Kolonay J.F."/>
            <person name="Nelson W.C."/>
            <person name="Umayam L.A."/>
            <person name="Ermolaeva M.D."/>
            <person name="Salzberg S.L."/>
            <person name="Delcher A."/>
            <person name="Utterback T.R."/>
            <person name="Weidman J.F."/>
            <person name="Khouri H.M."/>
            <person name="Gill J."/>
            <person name="Mikula A."/>
            <person name="Bishai W."/>
            <person name="Jacobs W.R. Jr."/>
            <person name="Venter J.C."/>
            <person name="Fraser C.M."/>
        </authorList>
    </citation>
    <scope>NUCLEOTIDE SEQUENCE [LARGE SCALE GENOMIC DNA]</scope>
    <source>
        <strain>CDC 1551 / Oshkosh</strain>
    </source>
</reference>
<feature type="chain" id="PRO_0000427322" description="Uncharacterized HTH-type transcriptional regulator MT0791">
    <location>
        <begin position="1"/>
        <end position="213"/>
    </location>
</feature>
<feature type="domain" description="HTH tetR-type" evidence="1">
    <location>
        <begin position="29"/>
        <end position="89"/>
    </location>
</feature>
<feature type="region of interest" description="Disordered" evidence="2">
    <location>
        <begin position="1"/>
        <end position="26"/>
    </location>
</feature>
<feature type="compositionally biased region" description="Polar residues" evidence="2">
    <location>
        <begin position="1"/>
        <end position="14"/>
    </location>
</feature>
<proteinExistence type="predicted"/>
<organism>
    <name type="scientific">Mycobacterium tuberculosis (strain CDC 1551 / Oshkosh)</name>
    <dbReference type="NCBI Taxonomy" id="83331"/>
    <lineage>
        <taxon>Bacteria</taxon>
        <taxon>Bacillati</taxon>
        <taxon>Actinomycetota</taxon>
        <taxon>Actinomycetes</taxon>
        <taxon>Mycobacteriales</taxon>
        <taxon>Mycobacteriaceae</taxon>
        <taxon>Mycobacterium</taxon>
        <taxon>Mycobacterium tuberculosis complex</taxon>
    </lineage>
</organism>
<sequence>MSSDVLVTTPAQRQTEPHAEAVSRNRRQQATFRKVLAAAMATLREKSYADLTVRLVAARAKVAPATAYTYFSSKNHLIAEVYLDLVRQVPCVTDVNVPMPIRVTSSLRHLALVVADEPEIGAACTAALLDGGADPAVRAVRDRIGAEIHRRITSAIGPGADPGTVFALEMAFFGALVQAGSGTFTYHEIADRLGYVVGLILAGANEPSTGGSE</sequence>
<dbReference type="EMBL" id="AE000516">
    <property type="protein sequence ID" value="AAK45033.1"/>
    <property type="molecule type" value="Genomic_DNA"/>
</dbReference>
<dbReference type="PIR" id="B70707">
    <property type="entry name" value="B70707"/>
</dbReference>
<dbReference type="RefSeq" id="WP_003403915.1">
    <property type="nucleotide sequence ID" value="NZ_KK341227.1"/>
</dbReference>
<dbReference type="SMR" id="P9WMD6"/>
<dbReference type="KEGG" id="mtc:MT0791"/>
<dbReference type="PATRIC" id="fig|83331.31.peg.850"/>
<dbReference type="HOGENOM" id="CLU_120438_0_0_11"/>
<dbReference type="Proteomes" id="UP000001020">
    <property type="component" value="Chromosome"/>
</dbReference>
<dbReference type="GO" id="GO:0003700">
    <property type="term" value="F:DNA-binding transcription factor activity"/>
    <property type="evidence" value="ECO:0007669"/>
    <property type="project" value="TreeGrafter"/>
</dbReference>
<dbReference type="GO" id="GO:0000976">
    <property type="term" value="F:transcription cis-regulatory region binding"/>
    <property type="evidence" value="ECO:0007669"/>
    <property type="project" value="TreeGrafter"/>
</dbReference>
<dbReference type="Gene3D" id="1.10.357.10">
    <property type="entry name" value="Tetracycline Repressor, domain 2"/>
    <property type="match status" value="1"/>
</dbReference>
<dbReference type="InterPro" id="IPR023772">
    <property type="entry name" value="DNA-bd_HTH_TetR-type_CS"/>
</dbReference>
<dbReference type="InterPro" id="IPR009057">
    <property type="entry name" value="Homeodomain-like_sf"/>
</dbReference>
<dbReference type="InterPro" id="IPR050109">
    <property type="entry name" value="HTH-type_TetR-like_transc_reg"/>
</dbReference>
<dbReference type="InterPro" id="IPR001647">
    <property type="entry name" value="HTH_TetR"/>
</dbReference>
<dbReference type="PANTHER" id="PTHR30055:SF234">
    <property type="entry name" value="HTH-TYPE TRANSCRIPTIONAL REGULATOR BETI"/>
    <property type="match status" value="1"/>
</dbReference>
<dbReference type="PANTHER" id="PTHR30055">
    <property type="entry name" value="HTH-TYPE TRANSCRIPTIONAL REGULATOR RUTR"/>
    <property type="match status" value="1"/>
</dbReference>
<dbReference type="Pfam" id="PF00440">
    <property type="entry name" value="TetR_N"/>
    <property type="match status" value="1"/>
</dbReference>
<dbReference type="PRINTS" id="PR00455">
    <property type="entry name" value="HTHTETR"/>
</dbReference>
<dbReference type="SUPFAM" id="SSF46689">
    <property type="entry name" value="Homeodomain-like"/>
    <property type="match status" value="1"/>
</dbReference>
<dbReference type="PROSITE" id="PS01081">
    <property type="entry name" value="HTH_TETR_1"/>
    <property type="match status" value="1"/>
</dbReference>
<dbReference type="PROSITE" id="PS50977">
    <property type="entry name" value="HTH_TETR_2"/>
    <property type="match status" value="1"/>
</dbReference>
<protein>
    <recommendedName>
        <fullName>Uncharacterized HTH-type transcriptional regulator MT0791</fullName>
    </recommendedName>
</protein>
<name>Y767_MYCTO</name>
<accession>P9WMD6</accession>
<accession>L0T6E6</accession>
<accession>P67432</accession>
<accession>P71822</accession>
<gene>
    <name type="ordered locus">MT0791</name>
</gene>
<evidence type="ECO:0000255" key="1">
    <source>
        <dbReference type="PROSITE-ProRule" id="PRU00335"/>
    </source>
</evidence>
<evidence type="ECO:0000256" key="2">
    <source>
        <dbReference type="SAM" id="MobiDB-lite"/>
    </source>
</evidence>